<proteinExistence type="inferred from homology"/>
<sequence>MLTFAPLNFLAIGVGATLGAWLRWVPGLRLNGAGWPWGTLTANLVGGYLIGVMVALIASHPEWPAWIRLAAVTGFLGGLTTFSTFSAETVDMLERGVYATAAAYAGASLAGSLAMTGLATVRLLLR</sequence>
<feature type="chain" id="PRO_0000110063" description="Fluoride-specific ion channel FluC">
    <location>
        <begin position="1"/>
        <end position="126"/>
    </location>
</feature>
<feature type="transmembrane region" description="Helical" evidence="1">
    <location>
        <begin position="2"/>
        <end position="22"/>
    </location>
</feature>
<feature type="transmembrane region" description="Helical" evidence="1">
    <location>
        <begin position="37"/>
        <end position="57"/>
    </location>
</feature>
<feature type="transmembrane region" description="Helical" evidence="1">
    <location>
        <begin position="65"/>
        <end position="85"/>
    </location>
</feature>
<feature type="transmembrane region" description="Helical" evidence="1">
    <location>
        <begin position="101"/>
        <end position="121"/>
    </location>
</feature>
<feature type="binding site" evidence="1">
    <location>
        <position position="77"/>
    </location>
    <ligand>
        <name>Na(+)</name>
        <dbReference type="ChEBI" id="CHEBI:29101"/>
        <note>structural</note>
    </ligand>
</feature>
<feature type="binding site" evidence="1">
    <location>
        <position position="80"/>
    </location>
    <ligand>
        <name>Na(+)</name>
        <dbReference type="ChEBI" id="CHEBI:29101"/>
        <note>structural</note>
    </ligand>
</feature>
<name>FLUC_BORPA</name>
<keyword id="KW-0997">Cell inner membrane</keyword>
<keyword id="KW-1003">Cell membrane</keyword>
<keyword id="KW-0407">Ion channel</keyword>
<keyword id="KW-0406">Ion transport</keyword>
<keyword id="KW-0472">Membrane</keyword>
<keyword id="KW-0479">Metal-binding</keyword>
<keyword id="KW-0915">Sodium</keyword>
<keyword id="KW-0812">Transmembrane</keyword>
<keyword id="KW-1133">Transmembrane helix</keyword>
<keyword id="KW-0813">Transport</keyword>
<evidence type="ECO:0000255" key="1">
    <source>
        <dbReference type="HAMAP-Rule" id="MF_00454"/>
    </source>
</evidence>
<gene>
    <name evidence="1" type="primary">fluC</name>
    <name evidence="1" type="synonym">crcB</name>
    <name type="ordered locus">BPP1831</name>
</gene>
<comment type="function">
    <text evidence="1">Fluoride-specific ion channel. Important for reducing fluoride concentration in the cell, thus reducing its toxicity.</text>
</comment>
<comment type="catalytic activity">
    <reaction evidence="1">
        <text>fluoride(in) = fluoride(out)</text>
        <dbReference type="Rhea" id="RHEA:76159"/>
        <dbReference type="ChEBI" id="CHEBI:17051"/>
    </reaction>
    <physiologicalReaction direction="left-to-right" evidence="1">
        <dbReference type="Rhea" id="RHEA:76160"/>
    </physiologicalReaction>
</comment>
<comment type="activity regulation">
    <text evidence="1">Na(+) is not transported, but it plays an essential structural role and its presence is essential for fluoride channel function.</text>
</comment>
<comment type="subcellular location">
    <subcellularLocation>
        <location evidence="1">Cell inner membrane</location>
        <topology evidence="1">Multi-pass membrane protein</topology>
    </subcellularLocation>
</comment>
<comment type="similarity">
    <text evidence="1">Belongs to the fluoride channel Fluc/FEX (TC 1.A.43) family.</text>
</comment>
<accession>Q7W9D1</accession>
<reference key="1">
    <citation type="journal article" date="2003" name="Nat. Genet.">
        <title>Comparative analysis of the genome sequences of Bordetella pertussis, Bordetella parapertussis and Bordetella bronchiseptica.</title>
        <authorList>
            <person name="Parkhill J."/>
            <person name="Sebaihia M."/>
            <person name="Preston A."/>
            <person name="Murphy L.D."/>
            <person name="Thomson N.R."/>
            <person name="Harris D.E."/>
            <person name="Holden M.T.G."/>
            <person name="Churcher C.M."/>
            <person name="Bentley S.D."/>
            <person name="Mungall K.L."/>
            <person name="Cerdeno-Tarraga A.-M."/>
            <person name="Temple L."/>
            <person name="James K.D."/>
            <person name="Harris B."/>
            <person name="Quail M.A."/>
            <person name="Achtman M."/>
            <person name="Atkin R."/>
            <person name="Baker S."/>
            <person name="Basham D."/>
            <person name="Bason N."/>
            <person name="Cherevach I."/>
            <person name="Chillingworth T."/>
            <person name="Collins M."/>
            <person name="Cronin A."/>
            <person name="Davis P."/>
            <person name="Doggett J."/>
            <person name="Feltwell T."/>
            <person name="Goble A."/>
            <person name="Hamlin N."/>
            <person name="Hauser H."/>
            <person name="Holroyd S."/>
            <person name="Jagels K."/>
            <person name="Leather S."/>
            <person name="Moule S."/>
            <person name="Norberczak H."/>
            <person name="O'Neil S."/>
            <person name="Ormond D."/>
            <person name="Price C."/>
            <person name="Rabbinowitsch E."/>
            <person name="Rutter S."/>
            <person name="Sanders M."/>
            <person name="Saunders D."/>
            <person name="Seeger K."/>
            <person name="Sharp S."/>
            <person name="Simmonds M."/>
            <person name="Skelton J."/>
            <person name="Squares R."/>
            <person name="Squares S."/>
            <person name="Stevens K."/>
            <person name="Unwin L."/>
            <person name="Whitehead S."/>
            <person name="Barrell B.G."/>
            <person name="Maskell D.J."/>
        </authorList>
    </citation>
    <scope>NUCLEOTIDE SEQUENCE [LARGE SCALE GENOMIC DNA]</scope>
    <source>
        <strain>12822 / ATCC BAA-587 / NCTC 13253</strain>
    </source>
</reference>
<dbReference type="EMBL" id="BX640428">
    <property type="protein sequence ID" value="CAE37133.1"/>
    <property type="molecule type" value="Genomic_DNA"/>
</dbReference>
<dbReference type="RefSeq" id="WP_010928226.1">
    <property type="nucleotide sequence ID" value="NC_002928.3"/>
</dbReference>
<dbReference type="SMR" id="Q7W9D1"/>
<dbReference type="GeneID" id="93203597"/>
<dbReference type="KEGG" id="bpa:BPP1831"/>
<dbReference type="HOGENOM" id="CLU_114342_3_3_4"/>
<dbReference type="Proteomes" id="UP000001421">
    <property type="component" value="Chromosome"/>
</dbReference>
<dbReference type="GO" id="GO:0005886">
    <property type="term" value="C:plasma membrane"/>
    <property type="evidence" value="ECO:0007669"/>
    <property type="project" value="UniProtKB-SubCell"/>
</dbReference>
<dbReference type="GO" id="GO:0062054">
    <property type="term" value="F:fluoride channel activity"/>
    <property type="evidence" value="ECO:0007669"/>
    <property type="project" value="UniProtKB-UniRule"/>
</dbReference>
<dbReference type="GO" id="GO:0046872">
    <property type="term" value="F:metal ion binding"/>
    <property type="evidence" value="ECO:0007669"/>
    <property type="project" value="UniProtKB-KW"/>
</dbReference>
<dbReference type="GO" id="GO:0140114">
    <property type="term" value="P:cellular detoxification of fluoride"/>
    <property type="evidence" value="ECO:0007669"/>
    <property type="project" value="UniProtKB-UniRule"/>
</dbReference>
<dbReference type="HAMAP" id="MF_00454">
    <property type="entry name" value="FluC"/>
    <property type="match status" value="1"/>
</dbReference>
<dbReference type="InterPro" id="IPR003691">
    <property type="entry name" value="FluC"/>
</dbReference>
<dbReference type="NCBIfam" id="NF010792">
    <property type="entry name" value="PRK14196.1"/>
    <property type="match status" value="1"/>
</dbReference>
<dbReference type="PANTHER" id="PTHR28259">
    <property type="entry name" value="FLUORIDE EXPORT PROTEIN 1-RELATED"/>
    <property type="match status" value="1"/>
</dbReference>
<dbReference type="PANTHER" id="PTHR28259:SF1">
    <property type="entry name" value="FLUORIDE EXPORT PROTEIN 1-RELATED"/>
    <property type="match status" value="1"/>
</dbReference>
<dbReference type="Pfam" id="PF02537">
    <property type="entry name" value="CRCB"/>
    <property type="match status" value="1"/>
</dbReference>
<organism>
    <name type="scientific">Bordetella parapertussis (strain 12822 / ATCC BAA-587 / NCTC 13253)</name>
    <dbReference type="NCBI Taxonomy" id="257311"/>
    <lineage>
        <taxon>Bacteria</taxon>
        <taxon>Pseudomonadati</taxon>
        <taxon>Pseudomonadota</taxon>
        <taxon>Betaproteobacteria</taxon>
        <taxon>Burkholderiales</taxon>
        <taxon>Alcaligenaceae</taxon>
        <taxon>Bordetella</taxon>
    </lineage>
</organism>
<protein>
    <recommendedName>
        <fullName evidence="1">Fluoride-specific ion channel FluC</fullName>
    </recommendedName>
</protein>